<organism>
    <name type="scientific">Corynebacterium glutamicum (strain ATCC 13032 / DSM 20300 / JCM 1318 / BCRC 11384 / CCUG 27702 / LMG 3730 / NBRC 12168 / NCIMB 10025 / NRRL B-2784 / 534)</name>
    <dbReference type="NCBI Taxonomy" id="196627"/>
    <lineage>
        <taxon>Bacteria</taxon>
        <taxon>Bacillati</taxon>
        <taxon>Actinomycetota</taxon>
        <taxon>Actinomycetes</taxon>
        <taxon>Mycobacteriales</taxon>
        <taxon>Corynebacteriaceae</taxon>
        <taxon>Corynebacterium</taxon>
    </lineage>
</organism>
<keyword id="KW-1003">Cell membrane</keyword>
<keyword id="KW-0961">Cell wall biogenesis/degradation</keyword>
<keyword id="KW-0328">Glycosyltransferase</keyword>
<keyword id="KW-0472">Membrane</keyword>
<keyword id="KW-1185">Reference proteome</keyword>
<keyword id="KW-0808">Transferase</keyword>
<keyword id="KW-0812">Transmembrane</keyword>
<keyword id="KW-1133">Transmembrane helix</keyword>
<sequence length="418" mass="46837">MSFSPVAPSISAPTPRRSRWDSIGNAVAWPLAMLLMAHRFFVLAINGAVTDDFTTVYSALRRFVEGIPVYNEVYHFVDPHYLYNPGATLLLAPLGYITHFTLARWMFIAVNLLAIVLAFGLLTRLSGWALRSMVWPIAIALAMLTETVQNTLIFSNINGILLLMLAIFLWCVVHKKSWLGGLVIGLAILIKPMFLPLLFLPLVKKQWGSLILGILTPVIFNAVAWFLVPGASEYVTRTMPYLGETRDFANSSLPGLAIYFGMPTWMEITWFLIFGAMVGLAVLALLRFRNTEPYFWAATTTGVLLTGVFFLSSLGQMYYSMMIFPMIFTLLGSRSVFHNWVAWVAAYFFLSPDTFTSQRLPDVARWMEFFSATVGWGLLIVVTFVSALIWFIGDIRAKGTPSSPITTDPTHDHLERTA</sequence>
<dbReference type="EC" id="2.4.2.47" evidence="1"/>
<dbReference type="EMBL" id="BA000036">
    <property type="protein sequence ID" value="BAB99290.1"/>
    <property type="molecule type" value="Genomic_DNA"/>
</dbReference>
<dbReference type="RefSeq" id="NP_601103.1">
    <property type="nucleotide sequence ID" value="NC_003450.3"/>
</dbReference>
<dbReference type="STRING" id="196627.cg2077"/>
<dbReference type="KEGG" id="cgb:cg2077"/>
<dbReference type="KEGG" id="cgl:Cgl1897"/>
<dbReference type="PATRIC" id="fig|196627.13.peg.1834"/>
<dbReference type="eggNOG" id="ENOG5033U55">
    <property type="taxonomic scope" value="Bacteria"/>
</dbReference>
<dbReference type="HOGENOM" id="CLU_055106_0_0_11"/>
<dbReference type="OrthoDB" id="5175994at2"/>
<dbReference type="BioCyc" id="CORYNE:G18NG-11489-MONOMER"/>
<dbReference type="UniPathway" id="UPA00963"/>
<dbReference type="Proteomes" id="UP000000582">
    <property type="component" value="Chromosome"/>
</dbReference>
<dbReference type="GO" id="GO:0005886">
    <property type="term" value="C:plasma membrane"/>
    <property type="evidence" value="ECO:0007669"/>
    <property type="project" value="UniProtKB-SubCell"/>
</dbReference>
<dbReference type="GO" id="GO:0016758">
    <property type="term" value="F:hexosyltransferase activity"/>
    <property type="evidence" value="ECO:0007669"/>
    <property type="project" value="InterPro"/>
</dbReference>
<dbReference type="GO" id="GO:0045227">
    <property type="term" value="P:capsule polysaccharide biosynthetic process"/>
    <property type="evidence" value="ECO:0007669"/>
    <property type="project" value="UniProtKB-UniPathway"/>
</dbReference>
<dbReference type="GO" id="GO:0071555">
    <property type="term" value="P:cell wall organization"/>
    <property type="evidence" value="ECO:0007669"/>
    <property type="project" value="UniProtKB-KW"/>
</dbReference>
<dbReference type="InterPro" id="IPR018584">
    <property type="entry name" value="GT87"/>
</dbReference>
<dbReference type="Pfam" id="PF09594">
    <property type="entry name" value="GT87"/>
    <property type="match status" value="1"/>
</dbReference>
<feature type="chain" id="PRO_0000451751" description="Alpha-(1-&gt;3)-arabinofuranosyltransferase">
    <location>
        <begin position="1"/>
        <end position="418"/>
    </location>
</feature>
<feature type="transmembrane region" description="Helical" evidence="2">
    <location>
        <begin position="25"/>
        <end position="45"/>
    </location>
</feature>
<feature type="transmembrane region" description="Helical" evidence="2">
    <location>
        <begin position="81"/>
        <end position="101"/>
    </location>
</feature>
<feature type="transmembrane region" description="Helical" evidence="2">
    <location>
        <begin position="102"/>
        <end position="122"/>
    </location>
</feature>
<feature type="transmembrane region" description="Helical" evidence="2">
    <location>
        <begin position="125"/>
        <end position="145"/>
    </location>
</feature>
<feature type="transmembrane region" description="Helical" evidence="2">
    <location>
        <begin position="153"/>
        <end position="173"/>
    </location>
</feature>
<feature type="transmembrane region" description="Helical" evidence="2">
    <location>
        <begin position="183"/>
        <end position="203"/>
    </location>
</feature>
<feature type="transmembrane region" description="Helical" evidence="2">
    <location>
        <begin position="210"/>
        <end position="230"/>
    </location>
</feature>
<feature type="transmembrane region" description="Helical" evidence="2">
    <location>
        <begin position="266"/>
        <end position="286"/>
    </location>
</feature>
<feature type="transmembrane region" description="Helical" evidence="2">
    <location>
        <begin position="293"/>
        <end position="312"/>
    </location>
</feature>
<feature type="transmembrane region" description="Helical" evidence="2">
    <location>
        <begin position="327"/>
        <end position="349"/>
    </location>
</feature>
<feature type="transmembrane region" description="Helical" evidence="2">
    <location>
        <begin position="372"/>
        <end position="392"/>
    </location>
</feature>
<accession>Q8NPB7</accession>
<accession>Q6M4C2</accession>
<proteinExistence type="inferred from homology"/>
<comment type="function">
    <text evidence="3">Involved in the biosynthesis of the arabinogalactan (AG) region of the mycolylarabinogalactan-peptidoglycan (mAGP) complex, an essential component of the corynebacterial cell wall. Catalyzes the addition of an arabinofuranosyl (Araf) residue from the sugar donor beta-D-arabinofuranosyl-1-monophosphoryldecaprenol (DPA) on the C-3 of an alpha-(1-&gt;5)-linked Araf from the arabinan backbone of AG.</text>
</comment>
<comment type="catalytic activity">
    <reaction evidence="1">
        <text>Adds an alpha-D-arabinofuranosyl group from trans,octacis-decaprenylphospho-beta-D-arabinofuranose at the 3-O-position of an alpha-(1-&gt;5)-arabinofuranan chain attached to a beta-(1-&gt;5)-galactofuranan chain.</text>
        <dbReference type="EC" id="2.4.2.47"/>
    </reaction>
</comment>
<comment type="pathway">
    <text evidence="3">Cell wall biogenesis; cell wall polysaccharide biosynthesis.</text>
</comment>
<comment type="subcellular location">
    <subcellularLocation>
        <location evidence="2">Cell membrane</location>
        <topology evidence="2">Multi-pass membrane protein</topology>
    </subcellularLocation>
</comment>
<comment type="disruption phenotype">
    <text evidence="3">Cells lacking this gene show reduced levels of cell wall-bound corynomycolic acid methyl esters (CMAMEs).</text>
</comment>
<comment type="similarity">
    <text evidence="5">Belongs to the glycosyltransferase 87 family.</text>
</comment>
<protein>
    <recommendedName>
        <fullName evidence="4">Alpha-(1-&gt;3)-arabinofuranosyltransferase</fullName>
        <ecNumber evidence="1">2.4.2.47</ecNumber>
    </recommendedName>
    <alternativeName>
        <fullName evidence="6">Arabinofuranan 3-O-arabinosyltransferase</fullName>
    </alternativeName>
    <alternativeName>
        <fullName>Arabinofuranosyltransferase C</fullName>
    </alternativeName>
</protein>
<gene>
    <name evidence="4" type="primary">aftC</name>
    <name evidence="7" type="ordered locus">Cgl1897</name>
</gene>
<reference key="1">
    <citation type="journal article" date="2003" name="Appl. Microbiol. Biotechnol.">
        <title>The Corynebacterium glutamicum genome: features and impacts on biotechnological processes.</title>
        <authorList>
            <person name="Ikeda M."/>
            <person name="Nakagawa S."/>
        </authorList>
    </citation>
    <scope>NUCLEOTIDE SEQUENCE [LARGE SCALE GENOMIC DNA]</scope>
    <source>
        <strain>ATCC 13032 / DSM 20300 / JCM 1318 / BCRC 11384 / CCUG 27702 / LMG 3730 / NBRC 12168 / NCIMB 10025 / NRRL B-2784 / 534</strain>
    </source>
</reference>
<reference key="2">
    <citation type="journal article" date="2008" name="Mol. Microbiol.">
        <title>Biosynthesis of mycobacterial arabinogalactan: identification of a novel alpha(1--&gt;3) arabinofuranosyltransferase.</title>
        <authorList>
            <person name="Birch H.L."/>
            <person name="Alderwick L.J."/>
            <person name="Bhatt A."/>
            <person name="Rittmann D."/>
            <person name="Krumbach K."/>
            <person name="Singh A."/>
            <person name="Bai Y."/>
            <person name="Lowary T.L."/>
            <person name="Eggeling L."/>
            <person name="Besra G.S."/>
        </authorList>
    </citation>
    <scope>FUNCTION</scope>
    <scope>DISRUPTION PHENOTYPE</scope>
    <scope>PATHWAY</scope>
    <source>
        <strain>ATCC 13032 / DSM 20300 / JCM 1318 / BCRC 11384 / CCUG 27702 / LMG 3730 / NBRC 12168 / NCIMB 10025 / NRRL B-2784 / 534</strain>
    </source>
</reference>
<evidence type="ECO:0000250" key="1">
    <source>
        <dbReference type="UniProtKB" id="A0QW28"/>
    </source>
</evidence>
<evidence type="ECO:0000255" key="2"/>
<evidence type="ECO:0000269" key="3">
    <source>
    </source>
</evidence>
<evidence type="ECO:0000303" key="4">
    <source>
    </source>
</evidence>
<evidence type="ECO:0000305" key="5"/>
<evidence type="ECO:0000305" key="6">
    <source>
    </source>
</evidence>
<evidence type="ECO:0000312" key="7">
    <source>
        <dbReference type="EMBL" id="BAB99290.1"/>
    </source>
</evidence>
<name>AFTC_CORGL</name>